<comment type="function">
    <text evidence="5 6 7 8 9 10 12 13 14 15 16 17">Deubiquitinase that mediates deubiquitination of target proteins such as BECN1, MITF, SKP2 and USP10 and is involved in various processes such as autophagy, endoplasmic reticulum-associated degradation (ERAD), cell cycle progression or DNA damage response (PubMed:21571647, PubMed:32772043, PubMed:33592542). Component of a regulatory loop that controls autophagy and p53/TP53 levels: mediates deubiquitination of BECN1, a key regulator of autophagy, leading to stabilize the PIK3C3/VPS34-containing complexes. Alternatively, forms with NEDD4 a deubiquitination complex, which subsequently stabilizes VPS34 to promote autophagy (PubMed:32101753). Also deubiquitinates USP10, an essential regulator of p53/TP53 stability. In turn, PIK3C3/VPS34-containing complexes regulate USP13 stability, suggesting the existence of a regulatory system by which PIK3C3/VPS34-containing complexes regulate p53/TP53 protein levels via USP10 and USP13. Recruited by nuclear UFD1 and mediates deubiquitination of SKP2, thereby regulating endoplasmic reticulum-associated degradation (ERAD). Also regulates ERAD through the deubiquitination of UBL4A a component of the BAG6/BAT3 complex. Mediates stabilization of SIAH2 independently of deubiquitinase activity: binds ubiquitinated SIAH2 and acts by impairing SIAH2 autoubiquitination. Regulates the cell cycle progression by stabilizing cell cycle proteins such as SKP2 and AURKB (PubMed:32772043). In addition, plays an important role in maintaining genomic stability and in DNA replication checkpoint activation via regulation of RAP80 and TOPBP1 (PubMed:33592542). Deubiquitinates the multifunctional protein HMGB1 and subsequently drives its nucleocytoplasmic localization and its secretion (PubMed:36585612). Positively regulates type I and type II interferon signalings by deubiquitinating STAT1 but negatively regulates antiviral response by deubiquitinating STING1 (PubMed:23940278, PubMed:28534493).</text>
</comment>
<comment type="catalytic activity">
    <reaction evidence="11 13 16">
        <text>Thiol-dependent hydrolysis of ester, thioester, amide, peptide and isopeptide bonds formed by the C-terminal Gly of ubiquitin (a 76-residue protein attached to proteins as an intracellular targeting signal).</text>
        <dbReference type="EC" id="3.4.19.12"/>
    </reaction>
</comment>
<comment type="activity regulation">
    <text evidence="9">Specifically inhibited by spautin-1 (specific and potent autophagy inhibitor-1), a derivative of MBCQ that binds to USP13 and inhibits deubiquitinase activity. Regulated by PIK3C3/VPS34-containing complexes. The weak deubiquitinase activity in vitro suggests the existence of some mechanism that activates the enzyme.</text>
</comment>
<comment type="subunit">
    <text evidence="6 7 12 14">Interacts with UFD1. Interacts (via UBA domains) with SIAH2 (when ubiquitinated). Interacts with BAG6; the interaction is direct and may mediate UBL4A deubiquitination (PubMed:24424410). Interacts (via UBA 2 domain) with AMFR; the interaction is direct (PubMed:24424410). Interacts with UBL4A; may be indirect via BAG6 (PubMed:24424410). Interacts with NEDD4 (PubMed:32101753).</text>
</comment>
<comment type="interaction">
    <interactant intactId="EBI-714351">
        <id>Q92995</id>
    </interactant>
    <interactant intactId="EBI-946046">
        <id>P54252</id>
        <label>ATXN3</label>
    </interactant>
    <organismsDiffer>false</organismsDiffer>
    <experiments>3</experiments>
</comment>
<comment type="interaction">
    <interactant intactId="EBI-714351">
        <id>Q92995</id>
    </interactant>
    <interactant intactId="EBI-724310">
        <id>Q15038</id>
        <label>DAZAP2</label>
    </interactant>
    <organismsDiffer>false</organismsDiffer>
    <experiments>3</experiments>
</comment>
<comment type="interaction">
    <interactant intactId="EBI-714351">
        <id>Q92995</id>
    </interactant>
    <interactant intactId="EBI-372899">
        <id>Q13148</id>
        <label>TARDBP</label>
    </interactant>
    <organismsDiffer>false</organismsDiffer>
    <experiments>3</experiments>
</comment>
<comment type="interaction">
    <interactant intactId="EBI-714351">
        <id>Q92995</id>
    </interactant>
    <interactant intactId="EBI-2341179">
        <id>Q9BYV6</id>
        <label>TRIM55</label>
    </interactant>
    <organismsDiffer>false</organismsDiffer>
    <experiments>2</experiments>
</comment>
<comment type="interaction">
    <interactant intactId="EBI-714351">
        <id>Q92995</id>
    </interactant>
    <interactant intactId="EBI-5661333">
        <id>Q969Q1</id>
        <label>TRIM63</label>
    </interactant>
    <organismsDiffer>false</organismsDiffer>
    <experiments>2</experiments>
</comment>
<comment type="interaction">
    <interactant intactId="EBI-714351">
        <id>Q92995</id>
    </interactant>
    <interactant intactId="EBI-25475888">
        <id>PRO_0000449630</id>
        <label>rep</label>
        <dbReference type="UniProtKB" id="P0DTD1"/>
    </interactant>
    <organismsDiffer>true</organismsDiffer>
    <experiments>4</experiments>
</comment>
<comment type="subcellular location">
    <subcellularLocation>
        <location evidence="17">Cytoplasm</location>
    </subcellularLocation>
</comment>
<comment type="alternative products">
    <event type="alternative splicing"/>
    <isoform>
        <id>Q92995-1</id>
        <name>1</name>
        <sequence type="displayed"/>
    </isoform>
    <isoform>
        <id>Q92995-2</id>
        <name>2</name>
        <sequence type="described" ref="VSP_043954"/>
    </isoform>
</comment>
<comment type="tissue specificity">
    <text>Highly expressed in ovary and testes.</text>
</comment>
<comment type="domain">
    <text evidence="10">The UBP-type zinc finger has lost its ability to bind ubiquitin and USP13 is not activated by unanchored ubiquitin. Swapping with the UBP-type zinc finger from USP5 restores ability to bind unanchored ubiquitin and subsequent activation of the protein (PubMed:22216260).</text>
</comment>
<comment type="domain">
    <text evidence="10">The UBA domains mediate binding to ubiquitin.</text>
</comment>
<comment type="PTM">
    <text evidence="15">Phosphorylated by AURKB at Ser-114; leading to stabilization of cell cycle proteins such as SKP2 and AURKB, but not MCL1.</text>
</comment>
<comment type="similarity">
    <text evidence="19">Belongs to the peptidase C19 family.</text>
</comment>
<proteinExistence type="evidence at protein level"/>
<reference key="1">
    <citation type="journal article" date="1998" name="Gene">
        <title>The genomic organization of Isopeptidase T-3 (ISOT-3), a new member of the ubiquitin specific protease family (UBP).</title>
        <authorList>
            <person name="Timms K.M."/>
            <person name="Ansari-Lari M.A."/>
            <person name="Morris W."/>
            <person name="Brown S.N."/>
            <person name="Gibbs R.A."/>
        </authorList>
    </citation>
    <scope>NUCLEOTIDE SEQUENCE [MRNA] (ISOFORM 1)</scope>
</reference>
<reference key="2">
    <citation type="journal article" date="2004" name="Nat. Genet.">
        <title>Complete sequencing and characterization of 21,243 full-length human cDNAs.</title>
        <authorList>
            <person name="Ota T."/>
            <person name="Suzuki Y."/>
            <person name="Nishikawa T."/>
            <person name="Otsuki T."/>
            <person name="Sugiyama T."/>
            <person name="Irie R."/>
            <person name="Wakamatsu A."/>
            <person name="Hayashi K."/>
            <person name="Sato H."/>
            <person name="Nagai K."/>
            <person name="Kimura K."/>
            <person name="Makita H."/>
            <person name="Sekine M."/>
            <person name="Obayashi M."/>
            <person name="Nishi T."/>
            <person name="Shibahara T."/>
            <person name="Tanaka T."/>
            <person name="Ishii S."/>
            <person name="Yamamoto J."/>
            <person name="Saito K."/>
            <person name="Kawai Y."/>
            <person name="Isono Y."/>
            <person name="Nakamura Y."/>
            <person name="Nagahari K."/>
            <person name="Murakami K."/>
            <person name="Yasuda T."/>
            <person name="Iwayanagi T."/>
            <person name="Wagatsuma M."/>
            <person name="Shiratori A."/>
            <person name="Sudo H."/>
            <person name="Hosoiri T."/>
            <person name="Kaku Y."/>
            <person name="Kodaira H."/>
            <person name="Kondo H."/>
            <person name="Sugawara M."/>
            <person name="Takahashi M."/>
            <person name="Kanda K."/>
            <person name="Yokoi T."/>
            <person name="Furuya T."/>
            <person name="Kikkawa E."/>
            <person name="Omura Y."/>
            <person name="Abe K."/>
            <person name="Kamihara K."/>
            <person name="Katsuta N."/>
            <person name="Sato K."/>
            <person name="Tanikawa M."/>
            <person name="Yamazaki M."/>
            <person name="Ninomiya K."/>
            <person name="Ishibashi T."/>
            <person name="Yamashita H."/>
            <person name="Murakawa K."/>
            <person name="Fujimori K."/>
            <person name="Tanai H."/>
            <person name="Kimata M."/>
            <person name="Watanabe M."/>
            <person name="Hiraoka S."/>
            <person name="Chiba Y."/>
            <person name="Ishida S."/>
            <person name="Ono Y."/>
            <person name="Takiguchi S."/>
            <person name="Watanabe S."/>
            <person name="Yosida M."/>
            <person name="Hotuta T."/>
            <person name="Kusano J."/>
            <person name="Kanehori K."/>
            <person name="Takahashi-Fujii A."/>
            <person name="Hara H."/>
            <person name="Tanase T.-O."/>
            <person name="Nomura Y."/>
            <person name="Togiya S."/>
            <person name="Komai F."/>
            <person name="Hara R."/>
            <person name="Takeuchi K."/>
            <person name="Arita M."/>
            <person name="Imose N."/>
            <person name="Musashino K."/>
            <person name="Yuuki H."/>
            <person name="Oshima A."/>
            <person name="Sasaki N."/>
            <person name="Aotsuka S."/>
            <person name="Yoshikawa Y."/>
            <person name="Matsunawa H."/>
            <person name="Ichihara T."/>
            <person name="Shiohata N."/>
            <person name="Sano S."/>
            <person name="Moriya S."/>
            <person name="Momiyama H."/>
            <person name="Satoh N."/>
            <person name="Takami S."/>
            <person name="Terashima Y."/>
            <person name="Suzuki O."/>
            <person name="Nakagawa S."/>
            <person name="Senoh A."/>
            <person name="Mizoguchi H."/>
            <person name="Goto Y."/>
            <person name="Shimizu F."/>
            <person name="Wakebe H."/>
            <person name="Hishigaki H."/>
            <person name="Watanabe T."/>
            <person name="Sugiyama A."/>
            <person name="Takemoto M."/>
            <person name="Kawakami B."/>
            <person name="Yamazaki M."/>
            <person name="Watanabe K."/>
            <person name="Kumagai A."/>
            <person name="Itakura S."/>
            <person name="Fukuzumi Y."/>
            <person name="Fujimori Y."/>
            <person name="Komiyama M."/>
            <person name="Tashiro H."/>
            <person name="Tanigami A."/>
            <person name="Fujiwara T."/>
            <person name="Ono T."/>
            <person name="Yamada K."/>
            <person name="Fujii Y."/>
            <person name="Ozaki K."/>
            <person name="Hirao M."/>
            <person name="Ohmori Y."/>
            <person name="Kawabata A."/>
            <person name="Hikiji T."/>
            <person name="Kobatake N."/>
            <person name="Inagaki H."/>
            <person name="Ikema Y."/>
            <person name="Okamoto S."/>
            <person name="Okitani R."/>
            <person name="Kawakami T."/>
            <person name="Noguchi S."/>
            <person name="Itoh T."/>
            <person name="Shigeta K."/>
            <person name="Senba T."/>
            <person name="Matsumura K."/>
            <person name="Nakajima Y."/>
            <person name="Mizuno T."/>
            <person name="Morinaga M."/>
            <person name="Sasaki M."/>
            <person name="Togashi T."/>
            <person name="Oyama M."/>
            <person name="Hata H."/>
            <person name="Watanabe M."/>
            <person name="Komatsu T."/>
            <person name="Mizushima-Sugano J."/>
            <person name="Satoh T."/>
            <person name="Shirai Y."/>
            <person name="Takahashi Y."/>
            <person name="Nakagawa K."/>
            <person name="Okumura K."/>
            <person name="Nagase T."/>
            <person name="Nomura N."/>
            <person name="Kikuchi H."/>
            <person name="Masuho Y."/>
            <person name="Yamashita R."/>
            <person name="Nakai K."/>
            <person name="Yada T."/>
            <person name="Nakamura Y."/>
            <person name="Ohara O."/>
            <person name="Isogai T."/>
            <person name="Sugano S."/>
        </authorList>
    </citation>
    <scope>NUCLEOTIDE SEQUENCE [LARGE SCALE MRNA] (ISOFORMS 1 AND 2)</scope>
    <source>
        <tissue>Testis</tissue>
        <tissue>Tongue</tissue>
    </source>
</reference>
<reference key="3">
    <citation type="journal article" date="2006" name="Nature">
        <title>The DNA sequence, annotation and analysis of human chromosome 3.</title>
        <authorList>
            <person name="Muzny D.M."/>
            <person name="Scherer S.E."/>
            <person name="Kaul R."/>
            <person name="Wang J."/>
            <person name="Yu J."/>
            <person name="Sudbrak R."/>
            <person name="Buhay C.J."/>
            <person name="Chen R."/>
            <person name="Cree A."/>
            <person name="Ding Y."/>
            <person name="Dugan-Rocha S."/>
            <person name="Gill R."/>
            <person name="Gunaratne P."/>
            <person name="Harris R.A."/>
            <person name="Hawes A.C."/>
            <person name="Hernandez J."/>
            <person name="Hodgson A.V."/>
            <person name="Hume J."/>
            <person name="Jackson A."/>
            <person name="Khan Z.M."/>
            <person name="Kovar-Smith C."/>
            <person name="Lewis L.R."/>
            <person name="Lozado R.J."/>
            <person name="Metzker M.L."/>
            <person name="Milosavljevic A."/>
            <person name="Miner G.R."/>
            <person name="Morgan M.B."/>
            <person name="Nazareth L.V."/>
            <person name="Scott G."/>
            <person name="Sodergren E."/>
            <person name="Song X.-Z."/>
            <person name="Steffen D."/>
            <person name="Wei S."/>
            <person name="Wheeler D.A."/>
            <person name="Wright M.W."/>
            <person name="Worley K.C."/>
            <person name="Yuan Y."/>
            <person name="Zhang Z."/>
            <person name="Adams C.Q."/>
            <person name="Ansari-Lari M.A."/>
            <person name="Ayele M."/>
            <person name="Brown M.J."/>
            <person name="Chen G."/>
            <person name="Chen Z."/>
            <person name="Clendenning J."/>
            <person name="Clerc-Blankenburg K.P."/>
            <person name="Chen R."/>
            <person name="Chen Z."/>
            <person name="Davis C."/>
            <person name="Delgado O."/>
            <person name="Dinh H.H."/>
            <person name="Dong W."/>
            <person name="Draper H."/>
            <person name="Ernst S."/>
            <person name="Fu G."/>
            <person name="Gonzalez-Garay M.L."/>
            <person name="Garcia D.K."/>
            <person name="Gillett W."/>
            <person name="Gu J."/>
            <person name="Hao B."/>
            <person name="Haugen E."/>
            <person name="Havlak P."/>
            <person name="He X."/>
            <person name="Hennig S."/>
            <person name="Hu S."/>
            <person name="Huang W."/>
            <person name="Jackson L.R."/>
            <person name="Jacob L.S."/>
            <person name="Kelly S.H."/>
            <person name="Kube M."/>
            <person name="Levy R."/>
            <person name="Li Z."/>
            <person name="Liu B."/>
            <person name="Liu J."/>
            <person name="Liu W."/>
            <person name="Lu J."/>
            <person name="Maheshwari M."/>
            <person name="Nguyen B.-V."/>
            <person name="Okwuonu G.O."/>
            <person name="Palmeiri A."/>
            <person name="Pasternak S."/>
            <person name="Perez L.M."/>
            <person name="Phelps K.A."/>
            <person name="Plopper F.J."/>
            <person name="Qiang B."/>
            <person name="Raymond C."/>
            <person name="Rodriguez R."/>
            <person name="Saenphimmachak C."/>
            <person name="Santibanez J."/>
            <person name="Shen H."/>
            <person name="Shen Y."/>
            <person name="Subramanian S."/>
            <person name="Tabor P.E."/>
            <person name="Verduzco D."/>
            <person name="Waldron L."/>
            <person name="Wang J."/>
            <person name="Wang J."/>
            <person name="Wang Q."/>
            <person name="Williams G.A."/>
            <person name="Wong G.K.-S."/>
            <person name="Yao Z."/>
            <person name="Zhang J."/>
            <person name="Zhang X."/>
            <person name="Zhao G."/>
            <person name="Zhou J."/>
            <person name="Zhou Y."/>
            <person name="Nelson D."/>
            <person name="Lehrach H."/>
            <person name="Reinhardt R."/>
            <person name="Naylor S.L."/>
            <person name="Yang H."/>
            <person name="Olson M."/>
            <person name="Weinstock G."/>
            <person name="Gibbs R.A."/>
        </authorList>
    </citation>
    <scope>NUCLEOTIDE SEQUENCE [LARGE SCALE GENOMIC DNA]</scope>
</reference>
<reference key="4">
    <citation type="submission" date="2005-09" db="EMBL/GenBank/DDBJ databases">
        <authorList>
            <person name="Mural R.J."/>
            <person name="Istrail S."/>
            <person name="Sutton G.G."/>
            <person name="Florea L."/>
            <person name="Halpern A.L."/>
            <person name="Mobarry C.M."/>
            <person name="Lippert R."/>
            <person name="Walenz B."/>
            <person name="Shatkay H."/>
            <person name="Dew I."/>
            <person name="Miller J.R."/>
            <person name="Flanigan M.J."/>
            <person name="Edwards N.J."/>
            <person name="Bolanos R."/>
            <person name="Fasulo D."/>
            <person name="Halldorsson B.V."/>
            <person name="Hannenhalli S."/>
            <person name="Turner R."/>
            <person name="Yooseph S."/>
            <person name="Lu F."/>
            <person name="Nusskern D.R."/>
            <person name="Shue B.C."/>
            <person name="Zheng X.H."/>
            <person name="Zhong F."/>
            <person name="Delcher A.L."/>
            <person name="Huson D.H."/>
            <person name="Kravitz S.A."/>
            <person name="Mouchard L."/>
            <person name="Reinert K."/>
            <person name="Remington K.A."/>
            <person name="Clark A.G."/>
            <person name="Waterman M.S."/>
            <person name="Eichler E.E."/>
            <person name="Adams M.D."/>
            <person name="Hunkapiller M.W."/>
            <person name="Myers E.W."/>
            <person name="Venter J.C."/>
        </authorList>
    </citation>
    <scope>NUCLEOTIDE SEQUENCE [LARGE SCALE GENOMIC DNA]</scope>
</reference>
<reference key="5">
    <citation type="journal article" date="2004" name="Genome Res.">
        <title>The status, quality, and expansion of the NIH full-length cDNA project: the Mammalian Gene Collection (MGC).</title>
        <authorList>
            <consortium name="The MGC Project Team"/>
        </authorList>
    </citation>
    <scope>NUCLEOTIDE SEQUENCE [LARGE SCALE MRNA] (ISOFORM 1)</scope>
    <source>
        <tissue>Uterus</tissue>
    </source>
</reference>
<reference key="6">
    <citation type="journal article" date="2007" name="PLoS ONE">
        <title>Screen for ISG15-crossreactive deubiquitinases.</title>
        <authorList>
            <person name="Catic A."/>
            <person name="Fiebiger E."/>
            <person name="Korbel G.A."/>
            <person name="Blom D."/>
            <person name="Galardy P.J."/>
            <person name="Ploegh H.L."/>
        </authorList>
    </citation>
    <scope>FUNCTION</scope>
</reference>
<reference key="7">
    <citation type="journal article" date="2008" name="Proc. Natl. Acad. Sci. U.S.A.">
        <title>A quantitative atlas of mitotic phosphorylation.</title>
        <authorList>
            <person name="Dephoure N."/>
            <person name="Zhou C."/>
            <person name="Villen J."/>
            <person name="Beausoleil S.A."/>
            <person name="Bakalarski C.E."/>
            <person name="Elledge S.J."/>
            <person name="Gygi S.P."/>
        </authorList>
    </citation>
    <scope>PHOSPHORYLATION [LARGE SCALE ANALYSIS] AT THR-122</scope>
    <scope>IDENTIFICATION BY MASS SPECTROMETRY [LARGE SCALE ANALYSIS]</scope>
    <source>
        <tissue>Cervix carcinoma</tissue>
    </source>
</reference>
<reference key="8">
    <citation type="journal article" date="2009" name="Sci. Signal.">
        <title>Quantitative phosphoproteomic analysis of T cell receptor signaling reveals system-wide modulation of protein-protein interactions.</title>
        <authorList>
            <person name="Mayya V."/>
            <person name="Lundgren D.H."/>
            <person name="Hwang S.-I."/>
            <person name="Rezaul K."/>
            <person name="Wu L."/>
            <person name="Eng J.K."/>
            <person name="Rodionov V."/>
            <person name="Han D.K."/>
        </authorList>
    </citation>
    <scope>PHOSPHORYLATION [LARGE SCALE ANALYSIS] AT SER-114 AND THR-122</scope>
    <scope>IDENTIFICATION BY MASS SPECTROMETRY [LARGE SCALE ANALYSIS]</scope>
    <source>
        <tissue>Leukemic T-cell</tissue>
    </source>
</reference>
<reference key="9">
    <citation type="journal article" date="2011" name="BMC Syst. Biol.">
        <title>Initial characterization of the human central proteome.</title>
        <authorList>
            <person name="Burkard T.R."/>
            <person name="Planyavsky M."/>
            <person name="Kaupe I."/>
            <person name="Breitwieser F.P."/>
            <person name="Buerckstuemmer T."/>
            <person name="Bennett K.L."/>
            <person name="Superti-Furga G."/>
            <person name="Colinge J."/>
        </authorList>
    </citation>
    <scope>IDENTIFICATION BY MASS SPECTROMETRY [LARGE SCALE ANALYSIS]</scope>
</reference>
<reference key="10">
    <citation type="journal article" date="2011" name="Cell">
        <title>Beclin1 controls the levels of p53 by regulating the deubiquitination activity of USP10 and USP13.</title>
        <authorList>
            <person name="Liu J."/>
            <person name="Xia H."/>
            <person name="Kim M."/>
            <person name="Xu L."/>
            <person name="Li Y."/>
            <person name="Zhang L."/>
            <person name="Cai Y."/>
            <person name="Norberg H.V."/>
            <person name="Zhang T."/>
            <person name="Furuya T."/>
            <person name="Jin M."/>
            <person name="Zhu Z."/>
            <person name="Wang H."/>
            <person name="Yu J."/>
            <person name="Li Y."/>
            <person name="Hao Y."/>
            <person name="Choi A."/>
            <person name="Ke H."/>
            <person name="Ma D."/>
            <person name="Yuan J."/>
        </authorList>
    </citation>
    <scope>FUNCTION</scope>
    <scope>ACTIVITY REGULATION</scope>
</reference>
<reference key="11">
    <citation type="journal article" date="2011" name="J. Biol. Chem.">
        <title>USP13 enzyme regulates Siah2 ligase stability and activity via noncatalytic ubiquitin-binding domains.</title>
        <authorList>
            <person name="Scortegagna M."/>
            <person name="Subtil T."/>
            <person name="Qi J."/>
            <person name="Kim H."/>
            <person name="Zhao W."/>
            <person name="Gu W."/>
            <person name="Kluger H."/>
            <person name="Ronai Z.A."/>
        </authorList>
    </citation>
    <scope>FUNCTION</scope>
    <scope>INTERACTION WITH SIAH2</scope>
    <scope>MUTAGENESIS OF TRP-221; LYS-233; PHE-273; CYS-345; MET-664; MET-739; HIS-814 AND HIS-823</scope>
</reference>
<reference key="12">
    <citation type="journal article" date="2011" name="Nat. Commun.">
        <title>Regulation of MITF stability by the USP13 deubiquitinase.</title>
        <authorList>
            <person name="Zhao X."/>
            <person name="Fiske B."/>
            <person name="Kawakami A."/>
            <person name="Li J."/>
            <person name="Fisher D.E."/>
        </authorList>
    </citation>
    <scope>FUNCTION</scope>
    <scope>MUTAGENESIS OF CYS-345</scope>
</reference>
<reference key="13">
    <citation type="journal article" date="2011" name="Proc. Natl. Acad. Sci. U.S.A.">
        <title>Ubiquitin-recognition protein Ufd1 couples the endoplasmic reticulum (ER) stress response to cell cycle control.</title>
        <authorList>
            <person name="Chen M."/>
            <person name="Gutierrez G.J."/>
            <person name="Ronai Z.A."/>
        </authorList>
    </citation>
    <scope>FUNCTION</scope>
    <scope>INTERACTION WITH UFD1</scope>
</reference>
<reference key="14">
    <citation type="journal article" date="2011" name="Sci. Signal.">
        <title>System-wide temporal characterization of the proteome and phosphoproteome of human embryonic stem cell differentiation.</title>
        <authorList>
            <person name="Rigbolt K.T."/>
            <person name="Prokhorova T.A."/>
            <person name="Akimov V."/>
            <person name="Henningsen J."/>
            <person name="Johansen P.T."/>
            <person name="Kratchmarova I."/>
            <person name="Kassem M."/>
            <person name="Mann M."/>
            <person name="Olsen J.V."/>
            <person name="Blagoev B."/>
        </authorList>
    </citation>
    <scope>PHOSPHORYLATION [LARGE SCALE ANALYSIS] AT THR-122</scope>
    <scope>IDENTIFICATION BY MASS SPECTROMETRY [LARGE SCALE ANALYSIS]</scope>
</reference>
<reference key="15">
    <citation type="journal article" date="2013" name="J. Immunol.">
        <title>Ubiquitin-specific protease 13 regulates IFN signaling by stabilizing STAT1.</title>
        <authorList>
            <person name="Yeh H.M."/>
            <person name="Yu C.Y."/>
            <person name="Yang H.C."/>
            <person name="Ko S.H."/>
            <person name="Liao C.L."/>
            <person name="Lin Y.L."/>
        </authorList>
    </citation>
    <scope>FUNCTION</scope>
    <scope>CATALYTIC ACTIVITY</scope>
    <scope>MUTAGENESIS OF MET-664 AND MET-739</scope>
</reference>
<reference key="16">
    <citation type="journal article" date="2014" name="Elife">
        <title>USP13 antagonizes gp78 to maintain functionality of a chaperone in ER-associated degradation.</title>
        <authorList>
            <person name="Liu Y."/>
            <person name="Soetandyo N."/>
            <person name="Lee J.G."/>
            <person name="Liu L."/>
            <person name="Xu Y."/>
            <person name="Clemons W.M. Jr."/>
            <person name="Ye Y."/>
        </authorList>
    </citation>
    <scope>FUNCTION</scope>
    <scope>INTERACTION WITH AMFR; BAG6 AND UBL4A</scope>
</reference>
<reference key="17">
    <citation type="journal article" date="2017" name="Nat. Struct. Mol. Biol.">
        <title>Site-specific mapping of the human SUMO proteome reveals co-modification with phosphorylation.</title>
        <authorList>
            <person name="Hendriks I.A."/>
            <person name="Lyon D."/>
            <person name="Young C."/>
            <person name="Jensen L.J."/>
            <person name="Vertegaal A.C."/>
            <person name="Nielsen M.L."/>
        </authorList>
    </citation>
    <scope>SUMOYLATION [LARGE SCALE ANALYSIS] AT LYS-311 AND LYS-405</scope>
    <scope>IDENTIFICATION BY MASS SPECTROMETRY [LARGE SCALE ANALYSIS]</scope>
</reference>
<reference key="18">
    <citation type="journal article" date="2017" name="Nat. Commun.">
        <title>USP13 negatively regulates antiviral responses by deubiquitinating STING.</title>
        <authorList>
            <person name="Sun H."/>
            <person name="Zhang Q."/>
            <person name="Jing Y.Y."/>
            <person name="Zhang M."/>
            <person name="Wang H.Y."/>
            <person name="Cai Z."/>
            <person name="Liuyu T."/>
            <person name="Zhang Z.D."/>
            <person name="Xiong T.C."/>
            <person name="Wu Y."/>
            <person name="Zhu Q.Y."/>
            <person name="Yao J."/>
            <person name="Shu H.B."/>
            <person name="Lin D."/>
            <person name="Zhong B."/>
        </authorList>
    </citation>
    <scope>FUNCTION</scope>
    <scope>CATALYTIC ACTIVITY</scope>
</reference>
<reference key="19">
    <citation type="journal article" date="2020" name="Cell Rep.">
        <title>Auto-ubiquitination of NEDD4-1 Recruits USP13 to Facilitate Autophagy through Deubiquitinating VPS34.</title>
        <authorList>
            <person name="Xie W."/>
            <person name="Jin S."/>
            <person name="Wu Y."/>
            <person name="Xian H."/>
            <person name="Tian S."/>
            <person name="Liu D.A."/>
            <person name="Guo Z."/>
            <person name="Cui J."/>
        </authorList>
    </citation>
    <scope>FUNCTION</scope>
    <scope>CATALYTIC ACTIVITY</scope>
    <scope>INTERACTION WITH NEDD4</scope>
</reference>
<reference key="20">
    <citation type="journal article" date="2020" name="Oncogene">
        <title>USP13 controls the stability of Aurora B impacting progression through the cell cycle.</title>
        <authorList>
            <person name="Esposito M."/>
            <person name="Akman H.B."/>
            <person name="Giron P."/>
            <person name="Ceregido M.A."/>
            <person name="Schepers R."/>
            <person name="Ramos Paez L.C."/>
            <person name="La Monaca E."/>
            <person name="De Greve J."/>
            <person name="Coux O."/>
            <person name="De Trez C."/>
            <person name="Lindon C."/>
            <person name="Gutierrez G.J."/>
        </authorList>
    </citation>
    <scope>FUNCTION</scope>
    <scope>PHOSPHORYLATION AT SER-114</scope>
</reference>
<reference key="21">
    <citation type="journal article" date="2021" name="DNA Repair">
        <title>USP13 regulates the replication stress response by deubiquitinating TopBP1.</title>
        <authorList>
            <person name="Kim W."/>
            <person name="Zhao F."/>
            <person name="Gao H."/>
            <person name="Qin S."/>
            <person name="Hou J."/>
            <person name="Deng M."/>
            <person name="Kloeber J.A."/>
            <person name="Huang J."/>
            <person name="Zhou Q."/>
            <person name="Guo G."/>
            <person name="Gao M."/>
            <person name="Zeng X."/>
            <person name="Zhu S."/>
            <person name="Tu X."/>
            <person name="Wu Z."/>
            <person name="Zhang Y."/>
            <person name="Yin P."/>
            <person name="Kaufmann S.H."/>
            <person name="Luo K."/>
            <person name="Lou Z."/>
        </authorList>
    </citation>
    <scope>FUNCTION</scope>
    <scope>CATALYTIC ACTIVITY</scope>
    <scope>MUTAGENESIS OF CYS-345</scope>
</reference>
<reference key="22">
    <citation type="journal article" date="2022" name="Mol. Med.">
        <title>USP13 regulates HMGB1 stability and secretion through its deubiquitinase activity.</title>
        <authorList>
            <person name="Shin J."/>
            <person name="Kim Y.H."/>
            <person name="Lee B."/>
            <person name="Chang J.H."/>
            <person name="Choi H.Y."/>
            <person name="Lee H."/>
            <person name="Song K.C."/>
            <person name="Kwak M.S."/>
            <person name="Choi J.E."/>
            <person name="Shin J.S."/>
        </authorList>
    </citation>
    <scope>FUNCTION</scope>
    <scope>SUBCELLULAR LOCATION</scope>
</reference>
<reference key="23">
    <citation type="journal article" date="2011" name="PLoS ONE">
        <title>Domain analysis reveals that a deubiquitinating enzyme USP13 performs non-activating catalysis for Lys63-linked polyubiquitin.</title>
        <authorList>
            <person name="Zhang Y.H."/>
            <person name="Zhou C.J."/>
            <person name="Zhou Z.R."/>
            <person name="Song A.X."/>
            <person name="Hu H.Y."/>
        </authorList>
    </citation>
    <scope>STRUCTURE BY NMR OF 188-301 AND 652-777</scope>
    <scope>FUNCTION</scope>
    <scope>DOMAIN</scope>
    <scope>UBIQUITIN-BINDING</scope>
</reference>
<protein>
    <recommendedName>
        <fullName>Ubiquitin carboxyl-terminal hydrolase 13</fullName>
        <ecNumber evidence="11 13 16">3.4.19.12</ecNumber>
    </recommendedName>
    <alternativeName>
        <fullName>Deubiquitinating enzyme 13</fullName>
    </alternativeName>
    <alternativeName>
        <fullName>Isopeptidase T-3</fullName>
        <shortName>ISOT-3</shortName>
    </alternativeName>
    <alternativeName>
        <fullName>Ubiquitin thioesterase 13</fullName>
    </alternativeName>
    <alternativeName>
        <fullName>Ubiquitin-specific-processing protease 13</fullName>
    </alternativeName>
</protein>
<dbReference type="EC" id="3.4.19.12" evidence="11 13 16"/>
<dbReference type="EMBL" id="U75362">
    <property type="protein sequence ID" value="AAC63405.1"/>
    <property type="molecule type" value="mRNA"/>
</dbReference>
<dbReference type="EMBL" id="AK290338">
    <property type="protein sequence ID" value="BAF83027.1"/>
    <property type="molecule type" value="mRNA"/>
</dbReference>
<dbReference type="EMBL" id="AK302404">
    <property type="protein sequence ID" value="BAG63715.1"/>
    <property type="molecule type" value="mRNA"/>
</dbReference>
<dbReference type="EMBL" id="AC007687">
    <property type="status" value="NOT_ANNOTATED_CDS"/>
    <property type="molecule type" value="Genomic_DNA"/>
</dbReference>
<dbReference type="EMBL" id="AC125604">
    <property type="status" value="NOT_ANNOTATED_CDS"/>
    <property type="molecule type" value="Genomic_DNA"/>
</dbReference>
<dbReference type="EMBL" id="CH471052">
    <property type="protein sequence ID" value="EAW78383.1"/>
    <property type="molecule type" value="Genomic_DNA"/>
</dbReference>
<dbReference type="EMBL" id="CH471052">
    <property type="protein sequence ID" value="EAW78384.1"/>
    <property type="molecule type" value="Genomic_DNA"/>
</dbReference>
<dbReference type="EMBL" id="BC016146">
    <property type="protein sequence ID" value="AAH16146.1"/>
    <property type="molecule type" value="mRNA"/>
</dbReference>
<dbReference type="CCDS" id="CCDS3235.1">
    <molecule id="Q92995-1"/>
</dbReference>
<dbReference type="RefSeq" id="NP_003931.2">
    <molecule id="Q92995-1"/>
    <property type="nucleotide sequence ID" value="NM_003940.3"/>
</dbReference>
<dbReference type="PDB" id="2L80">
    <property type="method" value="NMR"/>
    <property type="chains" value="A=188-301"/>
</dbReference>
<dbReference type="PDB" id="2LBC">
    <property type="method" value="NMR"/>
    <property type="chains" value="A=652-777"/>
</dbReference>
<dbReference type="PDBsum" id="2L80"/>
<dbReference type="PDBsum" id="2LBC"/>
<dbReference type="BMRB" id="Q92995"/>
<dbReference type="SMR" id="Q92995"/>
<dbReference type="BioGRID" id="114465">
    <property type="interactions" value="119"/>
</dbReference>
<dbReference type="CORUM" id="Q92995"/>
<dbReference type="DIP" id="DIP-53511N"/>
<dbReference type="FunCoup" id="Q92995">
    <property type="interactions" value="2817"/>
</dbReference>
<dbReference type="IntAct" id="Q92995">
    <property type="interactions" value="51"/>
</dbReference>
<dbReference type="MINT" id="Q92995"/>
<dbReference type="STRING" id="9606.ENSP00000263966"/>
<dbReference type="BindingDB" id="Q92995"/>
<dbReference type="ChEMBL" id="CHEMBL3407324"/>
<dbReference type="MEROPS" id="C19.012"/>
<dbReference type="GlyGen" id="Q92995">
    <property type="glycosylation" value="1 site, 1 O-linked glycan (1 site)"/>
</dbReference>
<dbReference type="iPTMnet" id="Q92995"/>
<dbReference type="PhosphoSitePlus" id="Q92995"/>
<dbReference type="BioMuta" id="USP13"/>
<dbReference type="DMDM" id="209572692"/>
<dbReference type="jPOST" id="Q92995"/>
<dbReference type="MassIVE" id="Q92995"/>
<dbReference type="PaxDb" id="9606-ENSP00000263966"/>
<dbReference type="PeptideAtlas" id="Q92995"/>
<dbReference type="ProteomicsDB" id="75664">
    <molecule id="Q92995-1"/>
</dbReference>
<dbReference type="ProteomicsDB" id="75665">
    <molecule id="Q92995-2"/>
</dbReference>
<dbReference type="Pumba" id="Q92995"/>
<dbReference type="Antibodypedia" id="1352">
    <property type="antibodies" value="330 antibodies from 35 providers"/>
</dbReference>
<dbReference type="DNASU" id="8975"/>
<dbReference type="Ensembl" id="ENST00000263966.8">
    <molecule id="Q92995-1"/>
    <property type="protein sequence ID" value="ENSP00000263966.3"/>
    <property type="gene ID" value="ENSG00000058056.10"/>
</dbReference>
<dbReference type="Ensembl" id="ENST00000496897.5">
    <molecule id="Q92995-2"/>
    <property type="protein sequence ID" value="ENSP00000417146.1"/>
    <property type="gene ID" value="ENSG00000058056.10"/>
</dbReference>
<dbReference type="GeneID" id="8975"/>
<dbReference type="KEGG" id="hsa:8975"/>
<dbReference type="MANE-Select" id="ENST00000263966.8">
    <property type="protein sequence ID" value="ENSP00000263966.3"/>
    <property type="RefSeq nucleotide sequence ID" value="NM_003940.3"/>
    <property type="RefSeq protein sequence ID" value="NP_003931.2"/>
</dbReference>
<dbReference type="UCSC" id="uc003fkh.4">
    <molecule id="Q92995-1"/>
    <property type="organism name" value="human"/>
</dbReference>
<dbReference type="AGR" id="HGNC:12611"/>
<dbReference type="CTD" id="8975"/>
<dbReference type="DisGeNET" id="8975"/>
<dbReference type="GeneCards" id="USP13"/>
<dbReference type="HGNC" id="HGNC:12611">
    <property type="gene designation" value="USP13"/>
</dbReference>
<dbReference type="HPA" id="ENSG00000058056">
    <property type="expression patterns" value="Group enriched (heart muscle, skeletal muscle, tongue)"/>
</dbReference>
<dbReference type="MIM" id="603591">
    <property type="type" value="gene"/>
</dbReference>
<dbReference type="neXtProt" id="NX_Q92995"/>
<dbReference type="OpenTargets" id="ENSG00000058056"/>
<dbReference type="PharmGKB" id="PA37237"/>
<dbReference type="VEuPathDB" id="HostDB:ENSG00000058056"/>
<dbReference type="eggNOG" id="KOG0944">
    <property type="taxonomic scope" value="Eukaryota"/>
</dbReference>
<dbReference type="GeneTree" id="ENSGT00940000157401"/>
<dbReference type="HOGENOM" id="CLU_009884_1_0_1"/>
<dbReference type="InParanoid" id="Q92995"/>
<dbReference type="OMA" id="ASTECAY"/>
<dbReference type="OrthoDB" id="361536at2759"/>
<dbReference type="PAN-GO" id="Q92995">
    <property type="GO annotations" value="5 GO annotations based on evolutionary models"/>
</dbReference>
<dbReference type="PhylomeDB" id="Q92995"/>
<dbReference type="TreeFam" id="TF300576"/>
<dbReference type="PathwayCommons" id="Q92995"/>
<dbReference type="Reactome" id="R-HSA-5689880">
    <property type="pathway name" value="Ub-specific processing proteases"/>
</dbReference>
<dbReference type="Reactome" id="R-HSA-8948751">
    <property type="pathway name" value="Regulation of PTEN stability and activity"/>
</dbReference>
<dbReference type="SignaLink" id="Q92995"/>
<dbReference type="SIGNOR" id="Q92995"/>
<dbReference type="BioGRID-ORCS" id="8975">
    <property type="hits" value="12 hits in 1199 CRISPR screens"/>
</dbReference>
<dbReference type="CD-CODE" id="91857CE7">
    <property type="entry name" value="Nucleolus"/>
</dbReference>
<dbReference type="ChiTaRS" id="USP13">
    <property type="organism name" value="human"/>
</dbReference>
<dbReference type="EvolutionaryTrace" id="Q92995"/>
<dbReference type="GeneWiki" id="USP13"/>
<dbReference type="GenomeRNAi" id="8975"/>
<dbReference type="Pharos" id="Q92995">
    <property type="development level" value="Tchem"/>
</dbReference>
<dbReference type="PRO" id="PR:Q92995"/>
<dbReference type="Proteomes" id="UP000005640">
    <property type="component" value="Chromosome 3"/>
</dbReference>
<dbReference type="RNAct" id="Q92995">
    <property type="molecule type" value="protein"/>
</dbReference>
<dbReference type="Bgee" id="ENSG00000058056">
    <property type="expression patterns" value="Expressed in skeletal muscle tissue of biceps brachii and 205 other cell types or tissues"/>
</dbReference>
<dbReference type="ExpressionAtlas" id="Q92995">
    <property type="expression patterns" value="baseline and differential"/>
</dbReference>
<dbReference type="GO" id="GO:0005829">
    <property type="term" value="C:cytosol"/>
    <property type="evidence" value="ECO:0000318"/>
    <property type="project" value="GO_Central"/>
</dbReference>
<dbReference type="GO" id="GO:0005654">
    <property type="term" value="C:nucleoplasm"/>
    <property type="evidence" value="ECO:0000304"/>
    <property type="project" value="Reactome"/>
</dbReference>
<dbReference type="GO" id="GO:0005634">
    <property type="term" value="C:nucleus"/>
    <property type="evidence" value="ECO:0000318"/>
    <property type="project" value="GO_Central"/>
</dbReference>
<dbReference type="GO" id="GO:1904288">
    <property type="term" value="F:BAT3 complex binding"/>
    <property type="evidence" value="ECO:0000314"/>
    <property type="project" value="ParkinsonsUK-UCL"/>
</dbReference>
<dbReference type="GO" id="GO:0004843">
    <property type="term" value="F:cysteine-type deubiquitinase activity"/>
    <property type="evidence" value="ECO:0000314"/>
    <property type="project" value="UniProtKB"/>
</dbReference>
<dbReference type="GO" id="GO:0004197">
    <property type="term" value="F:cysteine-type endopeptidase activity"/>
    <property type="evidence" value="ECO:0000315"/>
    <property type="project" value="UniProtKB"/>
</dbReference>
<dbReference type="GO" id="GO:1990380">
    <property type="term" value="F:K48-linked deubiquitinase activity"/>
    <property type="evidence" value="ECO:0000315"/>
    <property type="project" value="ParkinsonsUK-UCL"/>
</dbReference>
<dbReference type="GO" id="GO:0070628">
    <property type="term" value="F:proteasome binding"/>
    <property type="evidence" value="ECO:0000314"/>
    <property type="project" value="ParkinsonsUK-UCL"/>
</dbReference>
<dbReference type="GO" id="GO:0051087">
    <property type="term" value="F:protein-folding chaperone binding"/>
    <property type="evidence" value="ECO:0000353"/>
    <property type="project" value="ParkinsonsUK-UCL"/>
</dbReference>
<dbReference type="GO" id="GO:0043130">
    <property type="term" value="F:ubiquitin binding"/>
    <property type="evidence" value="ECO:0000314"/>
    <property type="project" value="UniProtKB"/>
</dbReference>
<dbReference type="GO" id="GO:0031625">
    <property type="term" value="F:ubiquitin protein ligase binding"/>
    <property type="evidence" value="ECO:0000353"/>
    <property type="project" value="UniProtKB"/>
</dbReference>
<dbReference type="GO" id="GO:0044389">
    <property type="term" value="F:ubiquitin-like protein ligase binding"/>
    <property type="evidence" value="ECO:0000353"/>
    <property type="project" value="ParkinsonsUK-UCL"/>
</dbReference>
<dbReference type="GO" id="GO:0008270">
    <property type="term" value="F:zinc ion binding"/>
    <property type="evidence" value="ECO:0007669"/>
    <property type="project" value="UniProtKB-KW"/>
</dbReference>
<dbReference type="GO" id="GO:0006914">
    <property type="term" value="P:autophagy"/>
    <property type="evidence" value="ECO:0007669"/>
    <property type="project" value="UniProtKB-KW"/>
</dbReference>
<dbReference type="GO" id="GO:0008283">
    <property type="term" value="P:cell population proliferation"/>
    <property type="evidence" value="ECO:0000315"/>
    <property type="project" value="UniProtKB"/>
</dbReference>
<dbReference type="GO" id="GO:0036506">
    <property type="term" value="P:maintenance of unfolded protein"/>
    <property type="evidence" value="ECO:0000315"/>
    <property type="project" value="ParkinsonsUK-UCL"/>
</dbReference>
<dbReference type="GO" id="GO:0030318">
    <property type="term" value="P:melanocyte differentiation"/>
    <property type="evidence" value="ECO:0000304"/>
    <property type="project" value="UniProtKB"/>
</dbReference>
<dbReference type="GO" id="GO:1904294">
    <property type="term" value="P:positive regulation of ERAD pathway"/>
    <property type="evidence" value="ECO:0000315"/>
    <property type="project" value="ParkinsonsUK-UCL"/>
</dbReference>
<dbReference type="GO" id="GO:0016579">
    <property type="term" value="P:protein deubiquitination"/>
    <property type="evidence" value="ECO:0000304"/>
    <property type="project" value="Reactome"/>
</dbReference>
<dbReference type="GO" id="GO:0035523">
    <property type="term" value="P:protein K29-linked deubiquitination"/>
    <property type="evidence" value="ECO:0000314"/>
    <property type="project" value="MGI"/>
</dbReference>
<dbReference type="GO" id="GO:0044313">
    <property type="term" value="P:protein K6-linked deubiquitination"/>
    <property type="evidence" value="ECO:0000314"/>
    <property type="project" value="MGI"/>
</dbReference>
<dbReference type="GO" id="GO:0070536">
    <property type="term" value="P:protein K63-linked deubiquitination"/>
    <property type="evidence" value="ECO:0000314"/>
    <property type="project" value="UniProtKB"/>
</dbReference>
<dbReference type="GO" id="GO:0050821">
    <property type="term" value="P:protein stabilization"/>
    <property type="evidence" value="ECO:0000314"/>
    <property type="project" value="UniProtKB"/>
</dbReference>
<dbReference type="GO" id="GO:0006508">
    <property type="term" value="P:proteolysis"/>
    <property type="evidence" value="ECO:0007669"/>
    <property type="project" value="UniProtKB-KW"/>
</dbReference>
<dbReference type="GO" id="GO:0010506">
    <property type="term" value="P:regulation of autophagy"/>
    <property type="evidence" value="ECO:0000314"/>
    <property type="project" value="UniProtKB"/>
</dbReference>
<dbReference type="GO" id="GO:0006355">
    <property type="term" value="P:regulation of DNA-templated transcription"/>
    <property type="evidence" value="ECO:0000315"/>
    <property type="project" value="UniProtKB"/>
</dbReference>
<dbReference type="GO" id="GO:0031647">
    <property type="term" value="P:regulation of protein stability"/>
    <property type="evidence" value="ECO:0000318"/>
    <property type="project" value="GO_Central"/>
</dbReference>
<dbReference type="CDD" id="cd02658">
    <property type="entry name" value="Peptidase_C19B"/>
    <property type="match status" value="1"/>
</dbReference>
<dbReference type="CDD" id="cd14384">
    <property type="entry name" value="UBA1_UBP13"/>
    <property type="match status" value="1"/>
</dbReference>
<dbReference type="CDD" id="cd14386">
    <property type="entry name" value="UBA2_UBP5"/>
    <property type="match status" value="1"/>
</dbReference>
<dbReference type="FunFam" id="1.10.8.10:FF:000016">
    <property type="entry name" value="Ubiquitin carboxyl-terminal hydrolase"/>
    <property type="match status" value="1"/>
</dbReference>
<dbReference type="FunFam" id="1.10.8.10:FF:000047">
    <property type="entry name" value="Ubiquitin carboxyl-terminal hydrolase"/>
    <property type="match status" value="1"/>
</dbReference>
<dbReference type="FunFam" id="3.30.40.10:FF:000026">
    <property type="entry name" value="Ubiquitin carboxyl-terminal hydrolase"/>
    <property type="match status" value="1"/>
</dbReference>
<dbReference type="FunFam" id="3.30.40.10:FF:000770">
    <property type="entry name" value="Ubiquitin carboxyl-terminal hydrolase"/>
    <property type="match status" value="1"/>
</dbReference>
<dbReference type="FunFam" id="3.90.70.10:FF:000042">
    <property type="entry name" value="Ubiquitin carboxyl-terminal hydrolase"/>
    <property type="match status" value="1"/>
</dbReference>
<dbReference type="FunFam" id="3.90.70.10:FF:000063">
    <property type="entry name" value="Ubiquitin carboxyl-terminal hydrolase"/>
    <property type="match status" value="1"/>
</dbReference>
<dbReference type="Gene3D" id="3.90.70.10">
    <property type="entry name" value="Cysteine proteinases"/>
    <property type="match status" value="1"/>
</dbReference>
<dbReference type="Gene3D" id="1.10.8.10">
    <property type="entry name" value="DNA helicase RuvA subunit, C-terminal domain"/>
    <property type="match status" value="2"/>
</dbReference>
<dbReference type="Gene3D" id="3.30.40.10">
    <property type="entry name" value="Zinc/RING finger domain, C3HC4 (zinc finger)"/>
    <property type="match status" value="2"/>
</dbReference>
<dbReference type="InterPro" id="IPR038765">
    <property type="entry name" value="Papain-like_cys_pep_sf"/>
</dbReference>
<dbReference type="InterPro" id="IPR001394">
    <property type="entry name" value="Peptidase_C19_UCH"/>
</dbReference>
<dbReference type="InterPro" id="IPR050185">
    <property type="entry name" value="Ub_carboxyl-term_hydrolase"/>
</dbReference>
<dbReference type="InterPro" id="IPR015940">
    <property type="entry name" value="UBA"/>
</dbReference>
<dbReference type="InterPro" id="IPR009060">
    <property type="entry name" value="UBA-like_sf"/>
</dbReference>
<dbReference type="InterPro" id="IPR016652">
    <property type="entry name" value="Ubiquitinyl_hydrolase"/>
</dbReference>
<dbReference type="InterPro" id="IPR041432">
    <property type="entry name" value="UBP13_Znf-UBP_var"/>
</dbReference>
<dbReference type="InterPro" id="IPR018200">
    <property type="entry name" value="USP_CS"/>
</dbReference>
<dbReference type="InterPro" id="IPR028889">
    <property type="entry name" value="USP_dom"/>
</dbReference>
<dbReference type="InterPro" id="IPR013083">
    <property type="entry name" value="Znf_RING/FYVE/PHD"/>
</dbReference>
<dbReference type="InterPro" id="IPR001607">
    <property type="entry name" value="Znf_UBP"/>
</dbReference>
<dbReference type="PANTHER" id="PTHR21646">
    <property type="entry name" value="UBIQUITIN CARBOXYL-TERMINAL HYDROLASE"/>
    <property type="match status" value="1"/>
</dbReference>
<dbReference type="PANTHER" id="PTHR21646:SF105">
    <property type="entry name" value="UBIQUITIN CARBOXYL-TERMINAL HYDROLASE 13"/>
    <property type="match status" value="1"/>
</dbReference>
<dbReference type="Pfam" id="PF00627">
    <property type="entry name" value="UBA"/>
    <property type="match status" value="1"/>
</dbReference>
<dbReference type="Pfam" id="PF22562">
    <property type="entry name" value="UBA_7"/>
    <property type="match status" value="1"/>
</dbReference>
<dbReference type="Pfam" id="PF00443">
    <property type="entry name" value="UCH"/>
    <property type="match status" value="1"/>
</dbReference>
<dbReference type="Pfam" id="PF02148">
    <property type="entry name" value="zf-UBP"/>
    <property type="match status" value="1"/>
</dbReference>
<dbReference type="Pfam" id="PF17807">
    <property type="entry name" value="zf-UBP_var"/>
    <property type="match status" value="1"/>
</dbReference>
<dbReference type="PIRSF" id="PIRSF016308">
    <property type="entry name" value="UBP"/>
    <property type="match status" value="1"/>
</dbReference>
<dbReference type="SMART" id="SM00165">
    <property type="entry name" value="UBA"/>
    <property type="match status" value="2"/>
</dbReference>
<dbReference type="SMART" id="SM00290">
    <property type="entry name" value="ZnF_UBP"/>
    <property type="match status" value="1"/>
</dbReference>
<dbReference type="SUPFAM" id="SSF54001">
    <property type="entry name" value="Cysteine proteinases"/>
    <property type="match status" value="1"/>
</dbReference>
<dbReference type="SUPFAM" id="SSF57850">
    <property type="entry name" value="RING/U-box"/>
    <property type="match status" value="1"/>
</dbReference>
<dbReference type="SUPFAM" id="SSF46934">
    <property type="entry name" value="UBA-like"/>
    <property type="match status" value="1"/>
</dbReference>
<dbReference type="PROSITE" id="PS50030">
    <property type="entry name" value="UBA"/>
    <property type="match status" value="2"/>
</dbReference>
<dbReference type="PROSITE" id="PS00972">
    <property type="entry name" value="USP_1"/>
    <property type="match status" value="1"/>
</dbReference>
<dbReference type="PROSITE" id="PS00973">
    <property type="entry name" value="USP_2"/>
    <property type="match status" value="1"/>
</dbReference>
<dbReference type="PROSITE" id="PS50235">
    <property type="entry name" value="USP_3"/>
    <property type="match status" value="1"/>
</dbReference>
<dbReference type="PROSITE" id="PS50271">
    <property type="entry name" value="ZF_UBP"/>
    <property type="match status" value="1"/>
</dbReference>
<sequence>MQRRGALFGMPGGSGGRKMAAGDIGELLVPHMPTIRVPRSGDRVYKNECAFSYDSPNSEGGLYVCMNTFLAFGREHVERHFRKTGQSVYMHLKRHVREKVRGASGGALPKRRNSKIFLDLDTDDDLNSDDYEYEDEAKLVIFPDHYEIALPNIEELPALVTIACDAVLSSKSPYRKQDPDTWENELPVSKYANNLTQLDNGVRIPPSGWKCARCDLRENLWLNLTDGSVLCGKWFFDSSGGNGHALEHYRDMGYPLAVKLGTITPDGADVYSFQEEEPVLDPHLAKHLAHFGIDMLHMHGTENGLQDNDIKLRVSEWEVIQESGTKLKPMYGPGYTGLKNLGNSCYLSSVMQAIFSIPEFQRAYVGNLPRIFDYSPLDPTQDFNTQMTKLGHGLLSGQYSKPPVKSELIEQVMKEEHKPQQNGISPRMFKAFVSKSHPEFSSNRQQDAQEFFLHLVNLVERNRIGSENPSDVFRFLVEERIQCCQTRKVRYTERVDYLMQLPVAMEAATNKDELIAYELTRREAEANRRPLPELVRAKIPFSACLQAFSEPENVDDFWSSALQAKSAGVKTSRFASFPEYLVVQIKKFTFGLDWVPKKFDVSIDMPDLLDINHLRARGLQPGEEELPDISPPIVIPDDSKDRLMNQLIDPSDIDESSVMQLAEMGFPLEACRKAVYFTGNMGAEVAFNWIIVHMEEPDFAEPLTMPGYGGAASAGASVFGASGLDNQPPEEIVAIITSMGFQRNQAIQALRATNNNLERALDWIFSHPEFEEDSDFVIEMENNANANIISEAKPEGPRVKDGSGTYELFAFISHMGTSTMSGHYICHIKKEGRWVIYNDHKVCASERPPKDLGYMYFYRRIPS</sequence>
<accession>Q92995</accession>
<accession>A8K2S3</accession>
<accession>B4DYF3</accession>
<accession>D3DNS2</accession>
<accession>Q96B25</accession>
<evidence type="ECO:0000255" key="1">
    <source>
        <dbReference type="PROSITE-ProRule" id="PRU00212"/>
    </source>
</evidence>
<evidence type="ECO:0000255" key="2">
    <source>
        <dbReference type="PROSITE-ProRule" id="PRU00502"/>
    </source>
</evidence>
<evidence type="ECO:0000255" key="3">
    <source>
        <dbReference type="PROSITE-ProRule" id="PRU10092"/>
    </source>
</evidence>
<evidence type="ECO:0000255" key="4">
    <source>
        <dbReference type="PROSITE-ProRule" id="PRU10093"/>
    </source>
</evidence>
<evidence type="ECO:0000269" key="5">
    <source>
    </source>
</evidence>
<evidence type="ECO:0000269" key="6">
    <source>
    </source>
</evidence>
<evidence type="ECO:0000269" key="7">
    <source>
    </source>
</evidence>
<evidence type="ECO:0000269" key="8">
    <source>
    </source>
</evidence>
<evidence type="ECO:0000269" key="9">
    <source>
    </source>
</evidence>
<evidence type="ECO:0000269" key="10">
    <source>
    </source>
</evidence>
<evidence type="ECO:0000269" key="11">
    <source>
    </source>
</evidence>
<evidence type="ECO:0000269" key="12">
    <source>
    </source>
</evidence>
<evidence type="ECO:0000269" key="13">
    <source>
    </source>
</evidence>
<evidence type="ECO:0000269" key="14">
    <source>
    </source>
</evidence>
<evidence type="ECO:0000269" key="15">
    <source>
    </source>
</evidence>
<evidence type="ECO:0000269" key="16">
    <source>
    </source>
</evidence>
<evidence type="ECO:0000269" key="17">
    <source>
    </source>
</evidence>
<evidence type="ECO:0000303" key="18">
    <source>
    </source>
</evidence>
<evidence type="ECO:0000305" key="19"/>
<evidence type="ECO:0007744" key="20">
    <source>
    </source>
</evidence>
<evidence type="ECO:0007744" key="21">
    <source>
    </source>
</evidence>
<evidence type="ECO:0007744" key="22">
    <source>
    </source>
</evidence>
<evidence type="ECO:0007744" key="23">
    <source>
    </source>
</evidence>
<evidence type="ECO:0007829" key="24">
    <source>
        <dbReference type="PDB" id="2L80"/>
    </source>
</evidence>
<evidence type="ECO:0007829" key="25">
    <source>
        <dbReference type="PDB" id="2LBC"/>
    </source>
</evidence>
<feature type="chain" id="PRO_0000080635" description="Ubiquitin carboxyl-terminal hydrolase 13">
    <location>
        <begin position="1"/>
        <end position="863"/>
    </location>
</feature>
<feature type="domain" description="USP">
    <location>
        <begin position="336"/>
        <end position="861"/>
    </location>
</feature>
<feature type="domain" description="UBA 1" evidence="1">
    <location>
        <begin position="652"/>
        <end position="693"/>
    </location>
</feature>
<feature type="domain" description="UBA 2" evidence="1">
    <location>
        <begin position="727"/>
        <end position="767"/>
    </location>
</feature>
<feature type="zinc finger region" description="UBP-type; degenerate" evidence="2">
    <location>
        <begin position="187"/>
        <end position="295"/>
    </location>
</feature>
<feature type="active site" description="Nucleophile" evidence="19">
    <location>
        <position position="345"/>
    </location>
</feature>
<feature type="active site" description="Proton acceptor" evidence="3 4">
    <location>
        <position position="823"/>
    </location>
</feature>
<feature type="binding site" evidence="2">
    <location>
        <position position="211"/>
    </location>
    <ligand>
        <name>Zn(2+)</name>
        <dbReference type="ChEBI" id="CHEBI:29105"/>
    </ligand>
</feature>
<feature type="binding site" evidence="2">
    <location>
        <position position="214"/>
    </location>
    <ligand>
        <name>Zn(2+)</name>
        <dbReference type="ChEBI" id="CHEBI:29105"/>
    </ligand>
</feature>
<feature type="binding site" evidence="2">
    <location>
        <position position="231"/>
    </location>
    <ligand>
        <name>Zn(2+)</name>
        <dbReference type="ChEBI" id="CHEBI:29105"/>
    </ligand>
</feature>
<feature type="binding site" evidence="2">
    <location>
        <position position="244"/>
    </location>
    <ligand>
        <name>Zn(2+)</name>
        <dbReference type="ChEBI" id="CHEBI:29105"/>
    </ligand>
</feature>
<feature type="modified residue" description="Phosphoserine; by AURKB" evidence="15 21">
    <location>
        <position position="114"/>
    </location>
</feature>
<feature type="modified residue" description="Phosphothreonine" evidence="20 21 22">
    <location>
        <position position="122"/>
    </location>
</feature>
<feature type="cross-link" description="Glycyl lysine isopeptide (Lys-Gly) (interchain with G-Cter in SUMO2)" evidence="23">
    <location>
        <position position="311"/>
    </location>
</feature>
<feature type="cross-link" description="Glycyl lysine isopeptide (Lys-Gly) (interchain with G-Cter in SUMO2)" evidence="23">
    <location>
        <position position="405"/>
    </location>
</feature>
<feature type="splice variant" id="VSP_043954" description="In isoform 2." evidence="18">
    <location>
        <begin position="1"/>
        <end position="65"/>
    </location>
</feature>
<feature type="mutagenesis site" description="Does not abolish ability to stabilize SIAH2." evidence="7">
    <original>W</original>
    <variation>A</variation>
    <location>
        <position position="221"/>
    </location>
</feature>
<feature type="mutagenesis site" description="Does not abolish ability to stabilize SIAH2." evidence="7">
    <original>K</original>
    <variation>A</variation>
    <location>
        <position position="233"/>
    </location>
</feature>
<feature type="mutagenesis site" description="Impairs ability to stabilize SIAH2." evidence="7">
    <original>F</original>
    <variation>A</variation>
    <location>
        <position position="273"/>
    </location>
</feature>
<feature type="mutagenesis site" description="Abolishes deubiquitinating activity. Does not abolish ability to stabilize SIAH2. Does not abolish ability to stabilize SIAH2; when associated with A-814 and A-823." evidence="7 8 16">
    <original>C</original>
    <variation>A</variation>
    <location>
        <position position="345"/>
    </location>
</feature>
<feature type="mutagenesis site" description="Impairs ability to stabilize SIAH2 and STAT1. Abolishes ability to stabilize SIAH2 and STAT1; when associated with E-739." evidence="7">
    <original>M</original>
    <variation>E</variation>
    <location>
        <position position="664"/>
    </location>
</feature>
<feature type="mutagenesis site" description="Impairs ability to stabilize SIAH2 and STAT1. Abolishes ability to stabilize SIAH2 and STAT1; when associated with E-664." evidence="7">
    <original>M</original>
    <variation>E</variation>
    <location>
        <position position="739"/>
    </location>
</feature>
<feature type="mutagenesis site" description="Does not abolish ability to stabilize SIAH2; when associated with A-345 and A-823." evidence="7">
    <original>H</original>
    <variation>A</variation>
    <location>
        <position position="814"/>
    </location>
</feature>
<feature type="mutagenesis site" description="Does not abolish ability to stabilize SIAH2; when associated with A-345 and A-814." evidence="7">
    <original>H</original>
    <variation>A</variation>
    <location>
        <position position="823"/>
    </location>
</feature>
<feature type="sequence conflict" description="In Ref. 1; AAC63405." evidence="19" ref="1">
    <original>V</original>
    <variation>A</variation>
    <location>
        <position position="96"/>
    </location>
</feature>
<feature type="sequence conflict" description="In Ref. 2; BAF83027." evidence="19" ref="2">
    <original>I</original>
    <variation>V</variation>
    <location>
        <position position="293"/>
    </location>
</feature>
<feature type="sequence conflict" description="In Ref. 2; BAF83027." evidence="19" ref="2">
    <original>L</original>
    <variation>F</variation>
    <location>
        <position position="305"/>
    </location>
</feature>
<feature type="sequence conflict" description="In Ref. 2; BAF83027." evidence="19" ref="2">
    <original>T</original>
    <variation>A</variation>
    <location>
        <position position="325"/>
    </location>
</feature>
<feature type="sequence conflict" description="In Ref. 2; BAF83027." evidence="19" ref="2">
    <original>L</original>
    <variation>P</variation>
    <location>
        <position position="338"/>
    </location>
</feature>
<feature type="turn" evidence="24">
    <location>
        <begin position="191"/>
        <end position="194"/>
    </location>
</feature>
<feature type="strand" evidence="24">
    <location>
        <begin position="212"/>
        <end position="214"/>
    </location>
</feature>
<feature type="strand" evidence="24">
    <location>
        <begin position="217"/>
        <end position="223"/>
    </location>
</feature>
<feature type="turn" evidence="24">
    <location>
        <begin position="224"/>
        <end position="226"/>
    </location>
</feature>
<feature type="strand" evidence="24">
    <location>
        <begin position="229"/>
        <end position="231"/>
    </location>
</feature>
<feature type="helix" evidence="24">
    <location>
        <begin position="244"/>
        <end position="251"/>
    </location>
</feature>
<feature type="strand" evidence="24">
    <location>
        <begin position="256"/>
        <end position="260"/>
    </location>
</feature>
<feature type="strand" evidence="24">
    <location>
        <begin position="269"/>
        <end position="272"/>
    </location>
</feature>
<feature type="turn" evidence="24">
    <location>
        <begin position="273"/>
        <end position="275"/>
    </location>
</feature>
<feature type="strand" evidence="24">
    <location>
        <begin position="277"/>
        <end position="279"/>
    </location>
</feature>
<feature type="helix" evidence="24">
    <location>
        <begin position="284"/>
        <end position="290"/>
    </location>
</feature>
<feature type="helix" evidence="24">
    <location>
        <begin position="296"/>
        <end position="299"/>
    </location>
</feature>
<feature type="helix" evidence="25">
    <location>
        <begin position="656"/>
        <end position="662"/>
    </location>
</feature>
<feature type="helix" evidence="25">
    <location>
        <begin position="669"/>
        <end position="678"/>
    </location>
</feature>
<feature type="helix" evidence="25">
    <location>
        <begin position="683"/>
        <end position="692"/>
    </location>
</feature>
<feature type="helix" evidence="25">
    <location>
        <begin position="693"/>
        <end position="695"/>
    </location>
</feature>
<feature type="strand" evidence="25">
    <location>
        <begin position="697"/>
        <end position="700"/>
    </location>
</feature>
<feature type="strand" evidence="25">
    <location>
        <begin position="710"/>
        <end position="714"/>
    </location>
</feature>
<feature type="helix" evidence="25">
    <location>
        <begin position="730"/>
        <end position="739"/>
    </location>
</feature>
<feature type="helix" evidence="25">
    <location>
        <begin position="743"/>
        <end position="753"/>
    </location>
</feature>
<feature type="helix" evidence="25">
    <location>
        <begin position="757"/>
        <end position="765"/>
    </location>
</feature>
<keyword id="KW-0002">3D-structure</keyword>
<keyword id="KW-0025">Alternative splicing</keyword>
<keyword id="KW-0072">Autophagy</keyword>
<keyword id="KW-0963">Cytoplasm</keyword>
<keyword id="KW-0378">Hydrolase</keyword>
<keyword id="KW-1017">Isopeptide bond</keyword>
<keyword id="KW-0479">Metal-binding</keyword>
<keyword id="KW-0597">Phosphoprotein</keyword>
<keyword id="KW-0645">Protease</keyword>
<keyword id="KW-1267">Proteomics identification</keyword>
<keyword id="KW-1185">Reference proteome</keyword>
<keyword id="KW-0677">Repeat</keyword>
<keyword id="KW-0788">Thiol protease</keyword>
<keyword id="KW-0832">Ubl conjugation</keyword>
<keyword id="KW-0833">Ubl conjugation pathway</keyword>
<keyword id="KW-0862">Zinc</keyword>
<keyword id="KW-0863">Zinc-finger</keyword>
<organism>
    <name type="scientific">Homo sapiens</name>
    <name type="common">Human</name>
    <dbReference type="NCBI Taxonomy" id="9606"/>
    <lineage>
        <taxon>Eukaryota</taxon>
        <taxon>Metazoa</taxon>
        <taxon>Chordata</taxon>
        <taxon>Craniata</taxon>
        <taxon>Vertebrata</taxon>
        <taxon>Euteleostomi</taxon>
        <taxon>Mammalia</taxon>
        <taxon>Eutheria</taxon>
        <taxon>Euarchontoglires</taxon>
        <taxon>Primates</taxon>
        <taxon>Haplorrhini</taxon>
        <taxon>Catarrhini</taxon>
        <taxon>Hominidae</taxon>
        <taxon>Homo</taxon>
    </lineage>
</organism>
<gene>
    <name type="primary">USP13</name>
    <name type="synonym">ISOT3</name>
</gene>
<name>UBP13_HUMAN</name>